<proteinExistence type="evidence at protein level"/>
<name>DRC7_DROME</name>
<organism>
    <name type="scientific">Drosophila melanogaster</name>
    <name type="common">Fruit fly</name>
    <dbReference type="NCBI Taxonomy" id="7227"/>
    <lineage>
        <taxon>Eukaryota</taxon>
        <taxon>Metazoa</taxon>
        <taxon>Ecdysozoa</taxon>
        <taxon>Arthropoda</taxon>
        <taxon>Hexapoda</taxon>
        <taxon>Insecta</taxon>
        <taxon>Pterygota</taxon>
        <taxon>Neoptera</taxon>
        <taxon>Endopterygota</taxon>
        <taxon>Diptera</taxon>
        <taxon>Brachycera</taxon>
        <taxon>Muscomorpha</taxon>
        <taxon>Ephydroidea</taxon>
        <taxon>Drosophilidae</taxon>
        <taxon>Drosophila</taxon>
        <taxon>Sophophora</taxon>
    </lineage>
</organism>
<protein>
    <recommendedName>
        <fullName>Coiled-coil domain-containing protein lobo</fullName>
    </recommendedName>
    <alternativeName>
        <fullName>Lost boys protein</fullName>
    </alternativeName>
</protein>
<accession>Q4V516</accession>
<gene>
    <name type="primary">lobo</name>
    <name type="ORF">CG13662</name>
</gene>
<sequence length="897" mass="105242">MPKVLFQKYKKVVSNIDPSRYSAKFKEIDEQRRSQGSESDFADEMEGEFEAEMEEMGSSEFSLSEGEPSLNIGKIDLSFPETVEEFENSPQCYPPSYYTLSPKERLLLLYAENFRKQLVLSYPKRRAMVLALPNECKVQKFVCTTIRPTAFIYTQLISSVEEIAKFVADFIQYEPLQDPINLPNRLISPETLLRKRKGNSYEMATLLVSMLIGAGHPALVVSGVAREETILNDQLAVPYPYPIVEVEVEEVKPKVEKPGQKYKLRGLPDLKSHLEEDMAEVHRQKEAEEKRIQDEIIRKQMEDLELLAVDRYHYRRSHAWVVIINNAPWSVKPKTTYTDVNGDVVEAPPTAIFIEPSTGFICETGCKQYILVDSIWNEYNYYVCKQKHQRVSELRWDLRDTKDWEHMLPGEPPEMRIYKMASDENVADEERDISEEKHLDCIGSWVERLHIGLADFEQRFPSSEKKIQYKGAIHERFSPYSQRDGKVMQLTIFNNDECTIPKVRYEYYENRSDLMRHVKYTYATDQFEEIFNKGRNDSLKSIEYFSDPSQQRKVHFFSASRIDSLELMVVEPGSLILHYKDRSDKCWYKEFEFTPAGNVLKKVTEKFLKASANDVCSNDIATRTFLFQQNKIVLKFHYTFGALTATVVEFTKPPRPDYGKELIYDEKLTKIYKANPLDPTRTNLELYRLLCEQLQYEDHLRKNFEKIFEDINNVFDLRKSEKAEPKLKFSIFDPLRNGAARAIRMRQFEEEEELKKEIASKPADFLAPYLVPYKHQEELTPEQSQNAYNACLNDLKSRFVSLLNNLQRHYEDLTSESKSLNRFLNKFENQFNNYDYKRLVQQSKDLELNKRMVQQRLTLTHEESQKKYEVVKNSLLKDPRLNFKKDDLARRASETSK</sequence>
<keyword id="KW-0966">Cell projection</keyword>
<keyword id="KW-0969">Cilium</keyword>
<keyword id="KW-0175">Coiled coil</keyword>
<keyword id="KW-0963">Cytoplasm</keyword>
<keyword id="KW-0206">Cytoskeleton</keyword>
<keyword id="KW-0282">Flagellum</keyword>
<keyword id="KW-1185">Reference proteome</keyword>
<comment type="function">
    <text evidence="1 5">Key component of the nexin-dynein regulatory complex (N-DRC), essential for N-DRC integrity. Involved in the regulation of flagellar motility (By similarity). Involved in sperm motility. Required for the sperm to enter in the coiled storage seminal receptacle (SR) tubule (PubMed:21289096).</text>
</comment>
<comment type="subcellular location">
    <subcellularLocation>
        <location evidence="5">Cell projection</location>
        <location evidence="5">Cilium</location>
        <location evidence="5">Flagellum</location>
    </subcellularLocation>
    <subcellularLocation>
        <location evidence="1">Cytoplasm</location>
        <location evidence="1">Cytoskeleton</location>
        <location evidence="1">Cilium axoneme</location>
    </subcellularLocation>
    <text evidence="5">Detected as regular puncta along the flagellum.</text>
</comment>
<comment type="tissue specificity">
    <text evidence="4 5">Testis-specific (at protein level).</text>
</comment>
<comment type="similarity">
    <text evidence="6">Belongs to the DRC7 family.</text>
</comment>
<feature type="chain" id="PRO_0000415787" description="Coiled-coil domain-containing protein lobo">
    <location>
        <begin position="1"/>
        <end position="897"/>
    </location>
</feature>
<feature type="region of interest" description="Disordered" evidence="3">
    <location>
        <begin position="27"/>
        <end position="49"/>
    </location>
</feature>
<feature type="coiled-coil region" evidence="2">
    <location>
        <begin position="269"/>
        <end position="306"/>
    </location>
</feature>
<feature type="coiled-coil region" evidence="2">
    <location>
        <begin position="801"/>
        <end position="858"/>
    </location>
</feature>
<feature type="compositionally biased region" description="Acidic residues" evidence="3">
    <location>
        <begin position="40"/>
        <end position="49"/>
    </location>
</feature>
<evidence type="ECO:0000250" key="1">
    <source>
        <dbReference type="UniProtKB" id="A8JAM0"/>
    </source>
</evidence>
<evidence type="ECO:0000255" key="2"/>
<evidence type="ECO:0000256" key="3">
    <source>
        <dbReference type="SAM" id="MobiDB-lite"/>
    </source>
</evidence>
<evidence type="ECO:0000269" key="4">
    <source>
    </source>
</evidence>
<evidence type="ECO:0000269" key="5">
    <source>
    </source>
</evidence>
<evidence type="ECO:0000305" key="6"/>
<dbReference type="EMBL" id="AE014297">
    <property type="protein sequence ID" value="ABI31207.1"/>
    <property type="molecule type" value="Genomic_DNA"/>
</dbReference>
<dbReference type="EMBL" id="BT022813">
    <property type="protein sequence ID" value="AAY55229.1"/>
    <property type="molecule type" value="mRNA"/>
</dbReference>
<dbReference type="EMBL" id="BT022840">
    <property type="protein sequence ID" value="AAY55256.1"/>
    <property type="molecule type" value="mRNA"/>
</dbReference>
<dbReference type="EMBL" id="BT022876">
    <property type="protein sequence ID" value="AAY55292.1"/>
    <property type="molecule type" value="mRNA"/>
</dbReference>
<dbReference type="RefSeq" id="NP_001036757.1">
    <property type="nucleotide sequence ID" value="NM_001043292.2"/>
</dbReference>
<dbReference type="SMR" id="Q4V516"/>
<dbReference type="BioGRID" id="607093">
    <property type="interactions" value="18"/>
</dbReference>
<dbReference type="FunCoup" id="Q4V516">
    <property type="interactions" value="20"/>
</dbReference>
<dbReference type="STRING" id="7227.FBpp0110094"/>
<dbReference type="PaxDb" id="7227-FBpp0110094"/>
<dbReference type="DNASU" id="4379864"/>
<dbReference type="EnsemblMetazoa" id="FBtr0110797">
    <property type="protein sequence ID" value="FBpp0110094"/>
    <property type="gene ID" value="FBgn0083946"/>
</dbReference>
<dbReference type="GeneID" id="4379864"/>
<dbReference type="KEGG" id="dme:Dmel_CG34110"/>
<dbReference type="UCSC" id="CG34110-RC">
    <property type="organism name" value="d. melanogaster"/>
</dbReference>
<dbReference type="AGR" id="FB:FBgn0083946"/>
<dbReference type="CTD" id="4379864"/>
<dbReference type="FlyBase" id="FBgn0083946">
    <property type="gene designation" value="lobo"/>
</dbReference>
<dbReference type="VEuPathDB" id="VectorBase:FBgn0083946"/>
<dbReference type="eggNOG" id="ENOG502QRNZ">
    <property type="taxonomic scope" value="Eukaryota"/>
</dbReference>
<dbReference type="HOGENOM" id="CLU_016052_0_0_1"/>
<dbReference type="InParanoid" id="Q4V516"/>
<dbReference type="OMA" id="CRDDYIT"/>
<dbReference type="OrthoDB" id="10262874at2759"/>
<dbReference type="PhylomeDB" id="Q4V516"/>
<dbReference type="BioGRID-ORCS" id="4379864">
    <property type="hits" value="0 hits in 1 CRISPR screen"/>
</dbReference>
<dbReference type="GenomeRNAi" id="4379864"/>
<dbReference type="PRO" id="PR:Q4V516"/>
<dbReference type="Proteomes" id="UP000000803">
    <property type="component" value="Chromosome 3R"/>
</dbReference>
<dbReference type="Bgee" id="FBgn0083946">
    <property type="expression patterns" value="Expressed in early elongation stage spermatid (Drosophila) in testis and 16 other cell types or tissues"/>
</dbReference>
<dbReference type="GO" id="GO:0005737">
    <property type="term" value="C:cytoplasm"/>
    <property type="evidence" value="ECO:0007669"/>
    <property type="project" value="UniProtKB-KW"/>
</dbReference>
<dbReference type="GO" id="GO:0005856">
    <property type="term" value="C:cytoskeleton"/>
    <property type="evidence" value="ECO:0007669"/>
    <property type="project" value="UniProtKB-KW"/>
</dbReference>
<dbReference type="GO" id="GO:0031514">
    <property type="term" value="C:motile cilium"/>
    <property type="evidence" value="ECO:0000314"/>
    <property type="project" value="FlyBase"/>
</dbReference>
<dbReference type="GO" id="GO:0030317">
    <property type="term" value="P:flagellated sperm motility"/>
    <property type="evidence" value="ECO:0000315"/>
    <property type="project" value="FlyBase"/>
</dbReference>
<dbReference type="GO" id="GO:0046693">
    <property type="term" value="P:sperm storage"/>
    <property type="evidence" value="ECO:0000315"/>
    <property type="project" value="FlyBase"/>
</dbReference>
<dbReference type="FunFam" id="3.10.620.30:FF:000012">
    <property type="entry name" value="Coiled-coil domain-containing protein lobo"/>
    <property type="match status" value="1"/>
</dbReference>
<dbReference type="Gene3D" id="3.10.620.30">
    <property type="match status" value="1"/>
</dbReference>
<dbReference type="InterPro" id="IPR033551">
    <property type="entry name" value="DRC7/lobo"/>
</dbReference>
<dbReference type="InterPro" id="IPR056292">
    <property type="entry name" value="DRC7_C"/>
</dbReference>
<dbReference type="InterPro" id="IPR056291">
    <property type="entry name" value="MORN_DRC7"/>
</dbReference>
<dbReference type="InterPro" id="IPR038765">
    <property type="entry name" value="Papain-like_cys_pep_sf"/>
</dbReference>
<dbReference type="InterPro" id="IPR002931">
    <property type="entry name" value="Transglutaminase-like"/>
</dbReference>
<dbReference type="PANTHER" id="PTHR35249">
    <property type="entry name" value="DYNEIN REGULATORY COMPLEX SUBUNIT 7"/>
    <property type="match status" value="1"/>
</dbReference>
<dbReference type="PANTHER" id="PTHR35249:SF2">
    <property type="entry name" value="DYNEIN REGULATORY COMPLEX SUBUNIT 7"/>
    <property type="match status" value="1"/>
</dbReference>
<dbReference type="Pfam" id="PF24671">
    <property type="entry name" value="DRC7_C"/>
    <property type="match status" value="1"/>
</dbReference>
<dbReference type="Pfam" id="PF24667">
    <property type="entry name" value="MORN_DRC7"/>
    <property type="match status" value="1"/>
</dbReference>
<dbReference type="Pfam" id="PF01841">
    <property type="entry name" value="Transglut_core"/>
    <property type="match status" value="1"/>
</dbReference>
<dbReference type="SUPFAM" id="SSF54001">
    <property type="entry name" value="Cysteine proteinases"/>
    <property type="match status" value="1"/>
</dbReference>
<reference key="1">
    <citation type="journal article" date="2000" name="Science">
        <title>The genome sequence of Drosophila melanogaster.</title>
        <authorList>
            <person name="Adams M.D."/>
            <person name="Celniker S.E."/>
            <person name="Holt R.A."/>
            <person name="Evans C.A."/>
            <person name="Gocayne J.D."/>
            <person name="Amanatides P.G."/>
            <person name="Scherer S.E."/>
            <person name="Li P.W."/>
            <person name="Hoskins R.A."/>
            <person name="Galle R.F."/>
            <person name="George R.A."/>
            <person name="Lewis S.E."/>
            <person name="Richards S."/>
            <person name="Ashburner M."/>
            <person name="Henderson S.N."/>
            <person name="Sutton G.G."/>
            <person name="Wortman J.R."/>
            <person name="Yandell M.D."/>
            <person name="Zhang Q."/>
            <person name="Chen L.X."/>
            <person name="Brandon R.C."/>
            <person name="Rogers Y.-H.C."/>
            <person name="Blazej R.G."/>
            <person name="Champe M."/>
            <person name="Pfeiffer B.D."/>
            <person name="Wan K.H."/>
            <person name="Doyle C."/>
            <person name="Baxter E.G."/>
            <person name="Helt G."/>
            <person name="Nelson C.R."/>
            <person name="Miklos G.L.G."/>
            <person name="Abril J.F."/>
            <person name="Agbayani A."/>
            <person name="An H.-J."/>
            <person name="Andrews-Pfannkoch C."/>
            <person name="Baldwin D."/>
            <person name="Ballew R.M."/>
            <person name="Basu A."/>
            <person name="Baxendale J."/>
            <person name="Bayraktaroglu L."/>
            <person name="Beasley E.M."/>
            <person name="Beeson K.Y."/>
            <person name="Benos P.V."/>
            <person name="Berman B.P."/>
            <person name="Bhandari D."/>
            <person name="Bolshakov S."/>
            <person name="Borkova D."/>
            <person name="Botchan M.R."/>
            <person name="Bouck J."/>
            <person name="Brokstein P."/>
            <person name="Brottier P."/>
            <person name="Burtis K.C."/>
            <person name="Busam D.A."/>
            <person name="Butler H."/>
            <person name="Cadieu E."/>
            <person name="Center A."/>
            <person name="Chandra I."/>
            <person name="Cherry J.M."/>
            <person name="Cawley S."/>
            <person name="Dahlke C."/>
            <person name="Davenport L.B."/>
            <person name="Davies P."/>
            <person name="de Pablos B."/>
            <person name="Delcher A."/>
            <person name="Deng Z."/>
            <person name="Mays A.D."/>
            <person name="Dew I."/>
            <person name="Dietz S.M."/>
            <person name="Dodson K."/>
            <person name="Doup L.E."/>
            <person name="Downes M."/>
            <person name="Dugan-Rocha S."/>
            <person name="Dunkov B.C."/>
            <person name="Dunn P."/>
            <person name="Durbin K.J."/>
            <person name="Evangelista C.C."/>
            <person name="Ferraz C."/>
            <person name="Ferriera S."/>
            <person name="Fleischmann W."/>
            <person name="Fosler C."/>
            <person name="Gabrielian A.E."/>
            <person name="Garg N.S."/>
            <person name="Gelbart W.M."/>
            <person name="Glasser K."/>
            <person name="Glodek A."/>
            <person name="Gong F."/>
            <person name="Gorrell J.H."/>
            <person name="Gu Z."/>
            <person name="Guan P."/>
            <person name="Harris M."/>
            <person name="Harris N.L."/>
            <person name="Harvey D.A."/>
            <person name="Heiman T.J."/>
            <person name="Hernandez J.R."/>
            <person name="Houck J."/>
            <person name="Hostin D."/>
            <person name="Houston K.A."/>
            <person name="Howland T.J."/>
            <person name="Wei M.-H."/>
            <person name="Ibegwam C."/>
            <person name="Jalali M."/>
            <person name="Kalush F."/>
            <person name="Karpen G.H."/>
            <person name="Ke Z."/>
            <person name="Kennison J.A."/>
            <person name="Ketchum K.A."/>
            <person name="Kimmel B.E."/>
            <person name="Kodira C.D."/>
            <person name="Kraft C.L."/>
            <person name="Kravitz S."/>
            <person name="Kulp D."/>
            <person name="Lai Z."/>
            <person name="Lasko P."/>
            <person name="Lei Y."/>
            <person name="Levitsky A.A."/>
            <person name="Li J.H."/>
            <person name="Li Z."/>
            <person name="Liang Y."/>
            <person name="Lin X."/>
            <person name="Liu X."/>
            <person name="Mattei B."/>
            <person name="McIntosh T.C."/>
            <person name="McLeod M.P."/>
            <person name="McPherson D."/>
            <person name="Merkulov G."/>
            <person name="Milshina N.V."/>
            <person name="Mobarry C."/>
            <person name="Morris J."/>
            <person name="Moshrefi A."/>
            <person name="Mount S.M."/>
            <person name="Moy M."/>
            <person name="Murphy B."/>
            <person name="Murphy L."/>
            <person name="Muzny D.M."/>
            <person name="Nelson D.L."/>
            <person name="Nelson D.R."/>
            <person name="Nelson K.A."/>
            <person name="Nixon K."/>
            <person name="Nusskern D.R."/>
            <person name="Pacleb J.M."/>
            <person name="Palazzolo M."/>
            <person name="Pittman G.S."/>
            <person name="Pan S."/>
            <person name="Pollard J."/>
            <person name="Puri V."/>
            <person name="Reese M.G."/>
            <person name="Reinert K."/>
            <person name="Remington K."/>
            <person name="Saunders R.D.C."/>
            <person name="Scheeler F."/>
            <person name="Shen H."/>
            <person name="Shue B.C."/>
            <person name="Siden-Kiamos I."/>
            <person name="Simpson M."/>
            <person name="Skupski M.P."/>
            <person name="Smith T.J."/>
            <person name="Spier E."/>
            <person name="Spradling A.C."/>
            <person name="Stapleton M."/>
            <person name="Strong R."/>
            <person name="Sun E."/>
            <person name="Svirskas R."/>
            <person name="Tector C."/>
            <person name="Turner R."/>
            <person name="Venter E."/>
            <person name="Wang A.H."/>
            <person name="Wang X."/>
            <person name="Wang Z.-Y."/>
            <person name="Wassarman D.A."/>
            <person name="Weinstock G.M."/>
            <person name="Weissenbach J."/>
            <person name="Williams S.M."/>
            <person name="Woodage T."/>
            <person name="Worley K.C."/>
            <person name="Wu D."/>
            <person name="Yang S."/>
            <person name="Yao Q.A."/>
            <person name="Ye J."/>
            <person name="Yeh R.-F."/>
            <person name="Zaveri J.S."/>
            <person name="Zhan M."/>
            <person name="Zhang G."/>
            <person name="Zhao Q."/>
            <person name="Zheng L."/>
            <person name="Zheng X.H."/>
            <person name="Zhong F.N."/>
            <person name="Zhong W."/>
            <person name="Zhou X."/>
            <person name="Zhu S.C."/>
            <person name="Zhu X."/>
            <person name="Smith H.O."/>
            <person name="Gibbs R.A."/>
            <person name="Myers E.W."/>
            <person name="Rubin G.M."/>
            <person name="Venter J.C."/>
        </authorList>
    </citation>
    <scope>NUCLEOTIDE SEQUENCE [LARGE SCALE GENOMIC DNA]</scope>
    <source>
        <strain>Berkeley</strain>
    </source>
</reference>
<reference key="2">
    <citation type="journal article" date="2002" name="Genome Biol.">
        <title>Annotation of the Drosophila melanogaster euchromatic genome: a systematic review.</title>
        <authorList>
            <person name="Misra S."/>
            <person name="Crosby M.A."/>
            <person name="Mungall C.J."/>
            <person name="Matthews B.B."/>
            <person name="Campbell K.S."/>
            <person name="Hradecky P."/>
            <person name="Huang Y."/>
            <person name="Kaminker J.S."/>
            <person name="Millburn G.H."/>
            <person name="Prochnik S.E."/>
            <person name="Smith C.D."/>
            <person name="Tupy J.L."/>
            <person name="Whitfield E.J."/>
            <person name="Bayraktaroglu L."/>
            <person name="Berman B.P."/>
            <person name="Bettencourt B.R."/>
            <person name="Celniker S.E."/>
            <person name="de Grey A.D.N.J."/>
            <person name="Drysdale R.A."/>
            <person name="Harris N.L."/>
            <person name="Richter J."/>
            <person name="Russo S."/>
            <person name="Schroeder A.J."/>
            <person name="Shu S.Q."/>
            <person name="Stapleton M."/>
            <person name="Yamada C."/>
            <person name="Ashburner M."/>
            <person name="Gelbart W.M."/>
            <person name="Rubin G.M."/>
            <person name="Lewis S.E."/>
        </authorList>
    </citation>
    <scope>GENOME REANNOTATION</scope>
    <source>
        <strain>Berkeley</strain>
    </source>
</reference>
<reference key="3">
    <citation type="submission" date="2005-05" db="EMBL/GenBank/DDBJ databases">
        <authorList>
            <person name="Stapleton M."/>
            <person name="Carlson J."/>
            <person name="Chavez C."/>
            <person name="Frise E."/>
            <person name="George R."/>
            <person name="Pacleb J."/>
            <person name="Park S."/>
            <person name="Wan K."/>
            <person name="Yu C."/>
            <person name="Celniker S."/>
        </authorList>
    </citation>
    <scope>NUCLEOTIDE SEQUENCE [LARGE SCALE MRNA]</scope>
    <source>
        <strain>Berkeley</strain>
    </source>
</reference>
<reference key="4">
    <citation type="journal article" date="2007" name="Nat. Genet.">
        <title>Using FlyAtlas to identify better Drosophila melanogaster models of human disease.</title>
        <authorList>
            <person name="Chintapalli V.R."/>
            <person name="Wang J."/>
            <person name="Dow J.A."/>
        </authorList>
    </citation>
    <scope>TISSUE SPECIFICITY</scope>
</reference>
<reference key="5">
    <citation type="journal article" date="2011" name="Mol. Biol. Cell">
        <title>Regulation of flagellar motility by the conserved flagellar protein CG34110/Ccdc135/FAP50.</title>
        <authorList>
            <person name="Yang Y."/>
            <person name="Cochran D.A."/>
            <person name="Gargano M.D."/>
            <person name="King I."/>
            <person name="Samhat N.K."/>
            <person name="Burger B.P."/>
            <person name="Sabourin K.R."/>
            <person name="Hou Y."/>
            <person name="Awata J."/>
            <person name="Parry D.A."/>
            <person name="Marshall W.F."/>
            <person name="Witman G.B."/>
            <person name="Lu X."/>
        </authorList>
    </citation>
    <scope>FUNCTION</scope>
    <scope>SUBCELLULAR LOCATION</scope>
    <scope>TISSUE SPECIFICITY</scope>
</reference>